<proteinExistence type="evidence at protein level"/>
<keyword id="KW-0268">Exocytosis</keyword>
<keyword id="KW-0532">Neurotransmitter transport</keyword>
<keyword id="KW-0597">Phosphoprotein</keyword>
<keyword id="KW-1185">Reference proteome</keyword>
<keyword id="KW-0770">Synapse</keyword>
<keyword id="KW-0813">Transport</keyword>
<name>RIMS4_RAT</name>
<dbReference type="EMBL" id="AF548739">
    <property type="protein sequence ID" value="AAN59931.1"/>
    <property type="molecule type" value="mRNA"/>
</dbReference>
<dbReference type="RefSeq" id="NP_733766.1">
    <property type="nucleotide sequence ID" value="NM_170666.1"/>
</dbReference>
<dbReference type="SMR" id="Q8CIX1"/>
<dbReference type="FunCoup" id="Q8CIX1">
    <property type="interactions" value="860"/>
</dbReference>
<dbReference type="STRING" id="10116.ENSRNOP00000014499"/>
<dbReference type="PhosphoSitePlus" id="Q8CIX1"/>
<dbReference type="PaxDb" id="10116-ENSRNOP00000014499"/>
<dbReference type="GeneID" id="266976"/>
<dbReference type="KEGG" id="rno:266976"/>
<dbReference type="UCSC" id="RGD:628695">
    <property type="organism name" value="rat"/>
</dbReference>
<dbReference type="AGR" id="RGD:628695"/>
<dbReference type="CTD" id="140730"/>
<dbReference type="RGD" id="628695">
    <property type="gene designation" value="Rims4"/>
</dbReference>
<dbReference type="eggNOG" id="KOG2060">
    <property type="taxonomic scope" value="Eukaryota"/>
</dbReference>
<dbReference type="InParanoid" id="Q8CIX1"/>
<dbReference type="PhylomeDB" id="Q8CIX1"/>
<dbReference type="PRO" id="PR:Q8CIX1"/>
<dbReference type="Proteomes" id="UP000002494">
    <property type="component" value="Unplaced"/>
</dbReference>
<dbReference type="GO" id="GO:0098978">
    <property type="term" value="C:glutamatergic synapse"/>
    <property type="evidence" value="ECO:0000314"/>
    <property type="project" value="SynGO"/>
</dbReference>
<dbReference type="GO" id="GO:0098793">
    <property type="term" value="C:presynapse"/>
    <property type="evidence" value="ECO:0007669"/>
    <property type="project" value="GOC"/>
</dbReference>
<dbReference type="GO" id="GO:0045202">
    <property type="term" value="C:synapse"/>
    <property type="evidence" value="ECO:0000314"/>
    <property type="project" value="SynGO"/>
</dbReference>
<dbReference type="GO" id="GO:0097060">
    <property type="term" value="C:synaptic membrane"/>
    <property type="evidence" value="ECO:0000250"/>
    <property type="project" value="ParkinsonsUK-UCL"/>
</dbReference>
<dbReference type="GO" id="GO:0031267">
    <property type="term" value="F:small GTPase binding"/>
    <property type="evidence" value="ECO:0007669"/>
    <property type="project" value="InterPro"/>
</dbReference>
<dbReference type="GO" id="GO:0044325">
    <property type="term" value="F:transmembrane transporter binding"/>
    <property type="evidence" value="ECO:0000250"/>
    <property type="project" value="ParkinsonsUK-UCL"/>
</dbReference>
<dbReference type="GO" id="GO:0006887">
    <property type="term" value="P:exocytosis"/>
    <property type="evidence" value="ECO:0007669"/>
    <property type="project" value="UniProtKB-KW"/>
</dbReference>
<dbReference type="GO" id="GO:0007269">
    <property type="term" value="P:neurotransmitter secretion"/>
    <property type="evidence" value="ECO:0000303"/>
    <property type="project" value="RGD"/>
</dbReference>
<dbReference type="GO" id="GO:0042391">
    <property type="term" value="P:regulation of membrane potential"/>
    <property type="evidence" value="ECO:0000250"/>
    <property type="project" value="ParkinsonsUK-UCL"/>
</dbReference>
<dbReference type="GO" id="GO:0050807">
    <property type="term" value="P:regulation of synapse organization"/>
    <property type="evidence" value="ECO:0000314"/>
    <property type="project" value="SynGO"/>
</dbReference>
<dbReference type="GO" id="GO:2000300">
    <property type="term" value="P:regulation of synaptic vesicle exocytosis"/>
    <property type="evidence" value="ECO:0000315"/>
    <property type="project" value="MGI"/>
</dbReference>
<dbReference type="FunFam" id="2.60.40.150:FF:000001">
    <property type="entry name" value="Regulating synaptic membrane exocytosis 3, isoform CRA_a"/>
    <property type="match status" value="1"/>
</dbReference>
<dbReference type="Gene3D" id="2.60.40.150">
    <property type="entry name" value="C2 domain"/>
    <property type="match status" value="1"/>
</dbReference>
<dbReference type="InterPro" id="IPR000008">
    <property type="entry name" value="C2_dom"/>
</dbReference>
<dbReference type="InterPro" id="IPR035892">
    <property type="entry name" value="C2_domain_sf"/>
</dbReference>
<dbReference type="InterPro" id="IPR039032">
    <property type="entry name" value="Rim-like"/>
</dbReference>
<dbReference type="PANTHER" id="PTHR12157:SF26">
    <property type="entry name" value="REGULATING SYNAPTIC MEMBRANE EXOCYTOSIS 4"/>
    <property type="match status" value="1"/>
</dbReference>
<dbReference type="PANTHER" id="PTHR12157">
    <property type="entry name" value="REGULATING SYNAPTIC MEMBRANE EXOCYTOSIS PROTEIN"/>
    <property type="match status" value="1"/>
</dbReference>
<dbReference type="Pfam" id="PF00168">
    <property type="entry name" value="C2"/>
    <property type="match status" value="1"/>
</dbReference>
<dbReference type="SMART" id="SM00239">
    <property type="entry name" value="C2"/>
    <property type="match status" value="1"/>
</dbReference>
<dbReference type="SUPFAM" id="SSF49562">
    <property type="entry name" value="C2 domain (Calcium/lipid-binding domain, CaLB)"/>
    <property type="match status" value="1"/>
</dbReference>
<dbReference type="PROSITE" id="PS50004">
    <property type="entry name" value="C2"/>
    <property type="match status" value="1"/>
</dbReference>
<sequence length="269" mass="29271">MERSQSRLSLSASFEALAIYFPCMNSFDDEDAADSRRLKGAIQRSTETGLAVEMPSRTLRQASHESIEDSMNSYGSEGNLNYGGVCLASDAQFSDFLGSMGPAQFVGRQTLATTPMGGVEIGLQERNGQLEVDIIQARGLTAKPGSKTLPAAYIKAYLLENGVCIAKKKTKVARKSLDPLYNQVLLFPESPQGKVLQVIVWGNYGRMERKQFMGVARVLLEELDLTTLAVGWYKLFPTSSMVDPATGPLLRQASQLSLESTVGPCGERS</sequence>
<accession>Q8CIX1</accession>
<protein>
    <recommendedName>
        <fullName>Regulating synaptic membrane exocytosis protein 4</fullName>
    </recommendedName>
    <alternativeName>
        <fullName>RIM4 gamma</fullName>
    </alternativeName>
    <alternativeName>
        <fullName>Rab3-interacting molecule 4</fullName>
        <shortName>RIM 4</shortName>
    </alternativeName>
</protein>
<evidence type="ECO:0000250" key="1"/>
<evidence type="ECO:0000250" key="2">
    <source>
        <dbReference type="UniProtKB" id="Q9H426"/>
    </source>
</evidence>
<evidence type="ECO:0000255" key="3">
    <source>
        <dbReference type="PROSITE-ProRule" id="PRU00041"/>
    </source>
</evidence>
<evidence type="ECO:0000269" key="4">
    <source>
    </source>
</evidence>
<gene>
    <name type="primary">Rims4</name>
</gene>
<reference key="1">
    <citation type="journal article" date="2003" name="Genomics">
        <title>Genomic definition of RIM proteins: evolutionary amplification of a family of synaptic regulatory proteins.</title>
        <authorList>
            <person name="Wang Y."/>
            <person name="Suedhof T.C."/>
        </authorList>
    </citation>
    <scope>NUCLEOTIDE SEQUENCE [MRNA]</scope>
    <scope>INTERACTION WITH PPFIA3</scope>
    <scope>TISSUE SPECIFICITY</scope>
</reference>
<comment type="function">
    <text evidence="1">Regulates synaptic membrane exocytosis.</text>
</comment>
<comment type="subunit">
    <text>Binds PPFIA3.</text>
</comment>
<comment type="subcellular location">
    <subcellularLocation>
        <location evidence="1">Synapse</location>
    </subcellularLocation>
</comment>
<comment type="tissue specificity">
    <text evidence="4">Brain specific.</text>
</comment>
<feature type="chain" id="PRO_0000190209" description="Regulating synaptic membrane exocytosis protein 4">
    <location>
        <begin position="1"/>
        <end position="269"/>
    </location>
</feature>
<feature type="domain" description="C2" evidence="3">
    <location>
        <begin position="115"/>
        <end position="233"/>
    </location>
</feature>
<feature type="modified residue" description="Phosphoserine" evidence="2">
    <location>
        <position position="254"/>
    </location>
</feature>
<feature type="modified residue" description="Phosphoserine" evidence="2">
    <location>
        <position position="257"/>
    </location>
</feature>
<organism>
    <name type="scientific">Rattus norvegicus</name>
    <name type="common">Rat</name>
    <dbReference type="NCBI Taxonomy" id="10116"/>
    <lineage>
        <taxon>Eukaryota</taxon>
        <taxon>Metazoa</taxon>
        <taxon>Chordata</taxon>
        <taxon>Craniata</taxon>
        <taxon>Vertebrata</taxon>
        <taxon>Euteleostomi</taxon>
        <taxon>Mammalia</taxon>
        <taxon>Eutheria</taxon>
        <taxon>Euarchontoglires</taxon>
        <taxon>Glires</taxon>
        <taxon>Rodentia</taxon>
        <taxon>Myomorpha</taxon>
        <taxon>Muroidea</taxon>
        <taxon>Muridae</taxon>
        <taxon>Murinae</taxon>
        <taxon>Rattus</taxon>
    </lineage>
</organism>